<keyword id="KW-0007">Acetylation</keyword>
<keyword id="KW-0963">Cytoplasm</keyword>
<keyword id="KW-1017">Isopeptide bond</keyword>
<keyword id="KW-0488">Methylation</keyword>
<keyword id="KW-0539">Nucleus</keyword>
<keyword id="KW-0597">Phosphoprotein</keyword>
<keyword id="KW-1185">Reference proteome</keyword>
<keyword id="KW-0687">Ribonucleoprotein</keyword>
<keyword id="KW-0690">Ribosome biogenesis</keyword>
<keyword id="KW-0832">Ubl conjugation</keyword>
<proteinExistence type="evidence at transcript level"/>
<name>NOP56_BOVIN</name>
<protein>
    <recommendedName>
        <fullName>Nucleolar protein 56</fullName>
    </recommendedName>
    <alternativeName>
        <fullName>Nucleolar protein 5A</fullName>
    </alternativeName>
</protein>
<dbReference type="EMBL" id="BC103114">
    <property type="protein sequence ID" value="AAI03115.1"/>
    <property type="molecule type" value="mRNA"/>
</dbReference>
<dbReference type="RefSeq" id="NP_001028794.1">
    <property type="nucleotide sequence ID" value="NM_001033622.2"/>
</dbReference>
<dbReference type="SMR" id="Q3SZ63"/>
<dbReference type="FunCoup" id="Q3SZ63">
    <property type="interactions" value="3770"/>
</dbReference>
<dbReference type="STRING" id="9913.ENSBTAP00000025042"/>
<dbReference type="PaxDb" id="9913-ENSBTAP00000025042"/>
<dbReference type="GeneID" id="404165"/>
<dbReference type="KEGG" id="bta:404165"/>
<dbReference type="CTD" id="10528"/>
<dbReference type="eggNOG" id="KOG2573">
    <property type="taxonomic scope" value="Eukaryota"/>
</dbReference>
<dbReference type="InParanoid" id="Q3SZ63"/>
<dbReference type="OrthoDB" id="6780543at2759"/>
<dbReference type="Proteomes" id="UP000009136">
    <property type="component" value="Unplaced"/>
</dbReference>
<dbReference type="GO" id="GO:0031428">
    <property type="term" value="C:box C/D methylation guide snoRNP complex"/>
    <property type="evidence" value="ECO:0000250"/>
    <property type="project" value="UniProtKB"/>
</dbReference>
<dbReference type="GO" id="GO:0005737">
    <property type="term" value="C:cytoplasm"/>
    <property type="evidence" value="ECO:0007669"/>
    <property type="project" value="UniProtKB-SubCell"/>
</dbReference>
<dbReference type="GO" id="GO:0005730">
    <property type="term" value="C:nucleolus"/>
    <property type="evidence" value="ECO:0007669"/>
    <property type="project" value="UniProtKB-SubCell"/>
</dbReference>
<dbReference type="GO" id="GO:0005654">
    <property type="term" value="C:nucleoplasm"/>
    <property type="evidence" value="ECO:0007669"/>
    <property type="project" value="UniProtKB-SubCell"/>
</dbReference>
<dbReference type="GO" id="GO:0032040">
    <property type="term" value="C:small-subunit processome"/>
    <property type="evidence" value="ECO:0000250"/>
    <property type="project" value="UniProtKB"/>
</dbReference>
<dbReference type="GO" id="GO:0030515">
    <property type="term" value="F:snoRNA binding"/>
    <property type="evidence" value="ECO:0000318"/>
    <property type="project" value="GO_Central"/>
</dbReference>
<dbReference type="GO" id="GO:0042274">
    <property type="term" value="P:ribosomal small subunit biogenesis"/>
    <property type="evidence" value="ECO:0000250"/>
    <property type="project" value="UniProtKB"/>
</dbReference>
<dbReference type="FunFam" id="1.10.246.90:FF:000001">
    <property type="entry name" value="Nucleolar protein 56"/>
    <property type="match status" value="1"/>
</dbReference>
<dbReference type="FunFam" id="1.10.287.4070:FF:000002">
    <property type="entry name" value="Nucleolar protein 56"/>
    <property type="match status" value="1"/>
</dbReference>
<dbReference type="Gene3D" id="1.10.287.4070">
    <property type="match status" value="1"/>
</dbReference>
<dbReference type="Gene3D" id="1.10.246.90">
    <property type="entry name" value="Nop domain"/>
    <property type="match status" value="1"/>
</dbReference>
<dbReference type="InterPro" id="IPR045056">
    <property type="entry name" value="Nop56/Nop58"/>
</dbReference>
<dbReference type="InterPro" id="IPR012974">
    <property type="entry name" value="NOP58/56_N"/>
</dbReference>
<dbReference type="InterPro" id="IPR042239">
    <property type="entry name" value="Nop_C"/>
</dbReference>
<dbReference type="InterPro" id="IPR002687">
    <property type="entry name" value="Nop_dom"/>
</dbReference>
<dbReference type="InterPro" id="IPR036070">
    <property type="entry name" value="Nop_dom_sf"/>
</dbReference>
<dbReference type="InterPro" id="IPR012976">
    <property type="entry name" value="NOSIC"/>
</dbReference>
<dbReference type="PANTHER" id="PTHR10894">
    <property type="entry name" value="NUCLEOLAR PROTEIN 5 NUCLEOLAR PROTEIN NOP5 NOP58"/>
    <property type="match status" value="1"/>
</dbReference>
<dbReference type="PANTHER" id="PTHR10894:SF0">
    <property type="entry name" value="NUCLEOLAR PROTEIN 56"/>
    <property type="match status" value="1"/>
</dbReference>
<dbReference type="Pfam" id="PF01798">
    <property type="entry name" value="Nop"/>
    <property type="match status" value="1"/>
</dbReference>
<dbReference type="Pfam" id="PF08156">
    <property type="entry name" value="NOP5NT"/>
    <property type="match status" value="1"/>
</dbReference>
<dbReference type="SMART" id="SM00931">
    <property type="entry name" value="NOSIC"/>
    <property type="match status" value="1"/>
</dbReference>
<dbReference type="SUPFAM" id="SSF89124">
    <property type="entry name" value="Nop domain"/>
    <property type="match status" value="1"/>
</dbReference>
<dbReference type="PROSITE" id="PS51358">
    <property type="entry name" value="NOP"/>
    <property type="match status" value="1"/>
</dbReference>
<sequence length="596" mass="66331">MVLLHVLFEHAVGYALLALKEVEEIILLLPQVEECVLNLGKFHNIVRLVAFCPFSSSQVALENANAVSEGVVHEDLRLLLETHLPPKKKKVLLGVGDPKIGAAIQEELGYNCQTGGVIAEILRGVRLHFHNLVKGLTDLSACKAQLGLGHSYSRAKVKFNVNRVDNMIIQSISLLDQLDKDINTFSMRVREWYGYHFPELVKIINDNATYCRLAQFIGNRKELNEEKLEKLEELTMDAAKAKAILDASRSSMGMDISAIDLINIESFSSRVVSLSEYRQSLHTYLRSKMSQVAPSLSALIGEAVGARLIAHAGSLTNLAKYPASTVQILGAEKALFRALKTRGNTPKYGLIFHSTFIGRAAAKNKGRISRYLANKCSIASRIDCFSEVPTSVFGEKLREQVEERLSFYETGEIPRKNLDVMKEAMVQAEEAAAEITRKLEKQEKKRLKKEKKRLAAIALASSENSSAPEECEETSERPKKKKKQKPQEVLQENGMEDPSVSFSKPKKKKSFSKEELVSSDLEETAGTGSLPKRKKSFPKEEPVTDPDESENKRVPKKKRKLSPKEEPLSSGPEEAAASKSSGSKKKKKLRKLSQES</sequence>
<evidence type="ECO:0000250" key="1">
    <source>
        <dbReference type="UniProtKB" id="O00567"/>
    </source>
</evidence>
<evidence type="ECO:0000250" key="2">
    <source>
        <dbReference type="UniProtKB" id="Q9D6Z1"/>
    </source>
</evidence>
<evidence type="ECO:0000255" key="3">
    <source>
        <dbReference type="PROSITE-ProRule" id="PRU00690"/>
    </source>
</evidence>
<evidence type="ECO:0000256" key="4">
    <source>
        <dbReference type="SAM" id="MobiDB-lite"/>
    </source>
</evidence>
<evidence type="ECO:0000305" key="5"/>
<gene>
    <name type="primary">NOP56</name>
    <name type="synonym">NOL5A</name>
</gene>
<reference key="1">
    <citation type="submission" date="2005-08" db="EMBL/GenBank/DDBJ databases">
        <authorList>
            <consortium name="NIH - Mammalian Gene Collection (MGC) project"/>
        </authorList>
    </citation>
    <scope>NUCLEOTIDE SEQUENCE [LARGE SCALE MRNA]</scope>
    <source>
        <strain>Hereford</strain>
        <tissue>Heart ventricle</tissue>
    </source>
</reference>
<feature type="chain" id="PRO_0000246078" description="Nucleolar protein 56">
    <location>
        <begin position="1"/>
        <end position="596"/>
    </location>
</feature>
<feature type="domain" description="Nop" evidence="3">
    <location>
        <begin position="292"/>
        <end position="410"/>
    </location>
</feature>
<feature type="region of interest" description="Disordered" evidence="4">
    <location>
        <begin position="458"/>
        <end position="596"/>
    </location>
</feature>
<feature type="compositionally biased region" description="Low complexity" evidence="4">
    <location>
        <begin position="569"/>
        <end position="581"/>
    </location>
</feature>
<feature type="compositionally biased region" description="Basic residues" evidence="4">
    <location>
        <begin position="582"/>
        <end position="596"/>
    </location>
</feature>
<feature type="modified residue" description="Phosphoserine" evidence="1">
    <location>
        <position position="314"/>
    </location>
</feature>
<feature type="modified residue" description="Omega-N-methylarginine" evidence="1">
    <location>
        <position position="359"/>
    </location>
</feature>
<feature type="modified residue" description="Phosphoserine" evidence="2">
    <location>
        <position position="465"/>
    </location>
</feature>
<feature type="modified residue" description="Phosphoserine" evidence="2">
    <location>
        <position position="466"/>
    </location>
</feature>
<feature type="modified residue" description="Phosphoserine" evidence="1">
    <location>
        <position position="510"/>
    </location>
</feature>
<feature type="modified residue" description="Phosphoserine" evidence="1">
    <location>
        <position position="518"/>
    </location>
</feature>
<feature type="modified residue" description="Phosphoserine" evidence="1">
    <location>
        <position position="519"/>
    </location>
</feature>
<feature type="modified residue" description="Phosphoserine" evidence="2">
    <location>
        <position position="536"/>
    </location>
</feature>
<feature type="modified residue" description="N6-acetyllysine" evidence="2">
    <location>
        <position position="560"/>
    </location>
</feature>
<feature type="modified residue" description="Phosphoserine" evidence="1">
    <location>
        <position position="562"/>
    </location>
</feature>
<feature type="modified residue" description="Phosphoserine" evidence="1">
    <location>
        <position position="569"/>
    </location>
</feature>
<feature type="modified residue" description="Phosphoserine" evidence="1">
    <location>
        <position position="570"/>
    </location>
</feature>
<feature type="modified residue" description="Phosphoserine" evidence="1">
    <location>
        <position position="581"/>
    </location>
</feature>
<feature type="modified residue" description="Phosphoserine" evidence="1">
    <location>
        <position position="583"/>
    </location>
</feature>
<feature type="cross-link" description="Glycyl lysine isopeptide (Lys-Gly) (interchain with G-Cter in SUMO2)" evidence="1">
    <location>
        <position position="87"/>
    </location>
</feature>
<feature type="cross-link" description="Glycyl lysine isopeptide (Lys-Gly) (interchain with G-Cter in SUMO2)" evidence="1">
    <location>
        <position position="230"/>
    </location>
</feature>
<feature type="cross-link" description="Glycyl lysine isopeptide (Lys-Gly) (interchain with G-Cter in SUMO2)" evidence="1">
    <location>
        <position position="240"/>
    </location>
</feature>
<feature type="cross-link" description="Glycyl lysine isopeptide (Lys-Gly) (interchain with G-Cter in SUMO2)" evidence="1">
    <location>
        <position position="539"/>
    </location>
</feature>
<feature type="cross-link" description="Glycyl lysine isopeptide (Lys-Gly) (interchain with G-Cter in SUMO2)" evidence="1">
    <location>
        <position position="564"/>
    </location>
</feature>
<comment type="function">
    <text evidence="1">Involved in the early to middle stages of 60S ribosomal subunit biogenesis. Required for the biogenesis of box C/D snoRNAs such U3, U8 and U14 snoRNAs. Part of the small subunit (SSU) processome, first precursor of the small eukaryotic ribosomal subunit. During the assembly of the SSU processome in the nucleolus, many ribosome biogenesis factors, an RNA chaperone and ribosomal proteins associate with the nascent pre-rRNA and work in concert to generate RNA folding, modifications, rearrangements and cleavage as well as targeted degradation of pre-ribosomal RNA by the RNA exosome. Core component of box C/D small nucleolar ribonucleoprotein (snoRNP) complexes that function in methylation of multiple sites on ribosomal RNAs (rRNAs) and messenger RNAs (mRNAs).</text>
</comment>
<comment type="subunit">
    <text evidence="1">Part of a large pre-ribosomal ribonucleoprotein (RNP) complex, that consists of at least 62 ribosomal proteins, 45 nonribosomal proteins and both pre-rRNA and mature rRNA species. Within this complex directly interacts with TCOF1 in an RNA-independent manner. Core component of box C/D small nucleolar ribonucleoprotein (snoRNP) particles; the core proteins SNU13, NOP56, NOP58 and FBL or FBLL1 assemble stepwise onto the snoRNA. Interacts with NOP1 and NOP58. Interacts with NUFIP1, RUVBL1 and RUVBL2; RUVBL1:RUVBL2 seem to bridge the association of NOP56 with NUFIP1. Part of the small subunit (SSU) processome, composed of more than 70 proteins and the RNA chaperone small nucleolar RNA (snoRNA) U3. Interacts with NOP2 and FBL.</text>
</comment>
<comment type="subcellular location">
    <subcellularLocation>
        <location evidence="1">Nucleus</location>
        <location evidence="1">Nucleolus</location>
    </subcellularLocation>
    <subcellularLocation>
        <location evidence="2">Cytoplasm</location>
    </subcellularLocation>
    <subcellularLocation>
        <location evidence="1">Nucleus</location>
        <location evidence="1">Nucleoplasm</location>
    </subcellularLocation>
</comment>
<comment type="similarity">
    <text evidence="5">Belongs to the NOP5/NOP56 family.</text>
</comment>
<organism>
    <name type="scientific">Bos taurus</name>
    <name type="common">Bovine</name>
    <dbReference type="NCBI Taxonomy" id="9913"/>
    <lineage>
        <taxon>Eukaryota</taxon>
        <taxon>Metazoa</taxon>
        <taxon>Chordata</taxon>
        <taxon>Craniata</taxon>
        <taxon>Vertebrata</taxon>
        <taxon>Euteleostomi</taxon>
        <taxon>Mammalia</taxon>
        <taxon>Eutheria</taxon>
        <taxon>Laurasiatheria</taxon>
        <taxon>Artiodactyla</taxon>
        <taxon>Ruminantia</taxon>
        <taxon>Pecora</taxon>
        <taxon>Bovidae</taxon>
        <taxon>Bovinae</taxon>
        <taxon>Bos</taxon>
    </lineage>
</organism>
<accession>Q3SZ63</accession>